<feature type="chain" id="PRO_1000187227" description="L-rhamnose mutarotase">
    <location>
        <begin position="1"/>
        <end position="104"/>
    </location>
</feature>
<feature type="active site" description="Proton donor" evidence="1">
    <location>
        <position position="22"/>
    </location>
</feature>
<feature type="binding site" evidence="1">
    <location>
        <position position="18"/>
    </location>
    <ligand>
        <name>substrate</name>
    </ligand>
</feature>
<feature type="binding site" evidence="1">
    <location>
        <position position="41"/>
    </location>
    <ligand>
        <name>substrate</name>
    </ligand>
</feature>
<feature type="binding site" evidence="1">
    <location>
        <begin position="76"/>
        <end position="77"/>
    </location>
    <ligand>
        <name>substrate</name>
    </ligand>
</feature>
<keyword id="KW-0119">Carbohydrate metabolism</keyword>
<keyword id="KW-0963">Cytoplasm</keyword>
<keyword id="KW-0413">Isomerase</keyword>
<keyword id="KW-0684">Rhamnose metabolism</keyword>
<organism>
    <name type="scientific">Salmonella enteritidis PT4 (strain P125109)</name>
    <dbReference type="NCBI Taxonomy" id="550537"/>
    <lineage>
        <taxon>Bacteria</taxon>
        <taxon>Pseudomonadati</taxon>
        <taxon>Pseudomonadota</taxon>
        <taxon>Gammaproteobacteria</taxon>
        <taxon>Enterobacterales</taxon>
        <taxon>Enterobacteriaceae</taxon>
        <taxon>Salmonella</taxon>
    </lineage>
</organism>
<gene>
    <name evidence="1" type="primary">rhaM</name>
    <name type="ordered locus">SEN3834</name>
</gene>
<name>RHAM_SALEP</name>
<reference key="1">
    <citation type="journal article" date="2008" name="Genome Res.">
        <title>Comparative genome analysis of Salmonella enteritidis PT4 and Salmonella gallinarum 287/91 provides insights into evolutionary and host adaptation pathways.</title>
        <authorList>
            <person name="Thomson N.R."/>
            <person name="Clayton D.J."/>
            <person name="Windhorst D."/>
            <person name="Vernikos G."/>
            <person name="Davidson S."/>
            <person name="Churcher C."/>
            <person name="Quail M.A."/>
            <person name="Stevens M."/>
            <person name="Jones M.A."/>
            <person name="Watson M."/>
            <person name="Barron A."/>
            <person name="Layton A."/>
            <person name="Pickard D."/>
            <person name="Kingsley R.A."/>
            <person name="Bignell A."/>
            <person name="Clark L."/>
            <person name="Harris B."/>
            <person name="Ormond D."/>
            <person name="Abdellah Z."/>
            <person name="Brooks K."/>
            <person name="Cherevach I."/>
            <person name="Chillingworth T."/>
            <person name="Woodward J."/>
            <person name="Norberczak H."/>
            <person name="Lord A."/>
            <person name="Arrowsmith C."/>
            <person name="Jagels K."/>
            <person name="Moule S."/>
            <person name="Mungall K."/>
            <person name="Saunders M."/>
            <person name="Whitehead S."/>
            <person name="Chabalgoity J.A."/>
            <person name="Maskell D."/>
            <person name="Humphreys T."/>
            <person name="Roberts M."/>
            <person name="Barrow P.A."/>
            <person name="Dougan G."/>
            <person name="Parkhill J."/>
        </authorList>
    </citation>
    <scope>NUCLEOTIDE SEQUENCE [LARGE SCALE GENOMIC DNA]</scope>
    <source>
        <strain>P125109</strain>
    </source>
</reference>
<proteinExistence type="inferred from homology"/>
<dbReference type="EC" id="5.1.3.32" evidence="1"/>
<dbReference type="EMBL" id="AM933172">
    <property type="protein sequence ID" value="CAR35407.1"/>
    <property type="molecule type" value="Genomic_DNA"/>
</dbReference>
<dbReference type="RefSeq" id="WP_000619478.1">
    <property type="nucleotide sequence ID" value="NC_011294.1"/>
</dbReference>
<dbReference type="SMR" id="B5QWX9"/>
<dbReference type="KEGG" id="set:SEN3834"/>
<dbReference type="HOGENOM" id="CLU_100689_2_0_6"/>
<dbReference type="UniPathway" id="UPA00125"/>
<dbReference type="Proteomes" id="UP000000613">
    <property type="component" value="Chromosome"/>
</dbReference>
<dbReference type="GO" id="GO:0005737">
    <property type="term" value="C:cytoplasm"/>
    <property type="evidence" value="ECO:0007669"/>
    <property type="project" value="UniProtKB-SubCell"/>
</dbReference>
<dbReference type="GO" id="GO:0062192">
    <property type="term" value="F:L-rhamnose mutarotase activity"/>
    <property type="evidence" value="ECO:0007669"/>
    <property type="project" value="UniProtKB-EC"/>
</dbReference>
<dbReference type="GO" id="GO:0019301">
    <property type="term" value="P:rhamnose catabolic process"/>
    <property type="evidence" value="ECO:0007669"/>
    <property type="project" value="TreeGrafter"/>
</dbReference>
<dbReference type="Gene3D" id="3.30.70.100">
    <property type="match status" value="1"/>
</dbReference>
<dbReference type="HAMAP" id="MF_01663">
    <property type="entry name" value="L_rham_rotase"/>
    <property type="match status" value="1"/>
</dbReference>
<dbReference type="InterPro" id="IPR011008">
    <property type="entry name" value="Dimeric_a/b-barrel"/>
</dbReference>
<dbReference type="InterPro" id="IPR013448">
    <property type="entry name" value="L-rhamnose_mutarotase"/>
</dbReference>
<dbReference type="InterPro" id="IPR008000">
    <property type="entry name" value="Rham/fucose_mutarotase"/>
</dbReference>
<dbReference type="NCBIfam" id="TIGR02625">
    <property type="entry name" value="YiiL_rotase"/>
    <property type="match status" value="1"/>
</dbReference>
<dbReference type="PANTHER" id="PTHR34389">
    <property type="entry name" value="L-RHAMNOSE MUTAROTASE"/>
    <property type="match status" value="1"/>
</dbReference>
<dbReference type="PANTHER" id="PTHR34389:SF2">
    <property type="entry name" value="L-RHAMNOSE MUTAROTASE"/>
    <property type="match status" value="1"/>
</dbReference>
<dbReference type="Pfam" id="PF05336">
    <property type="entry name" value="rhaM"/>
    <property type="match status" value="1"/>
</dbReference>
<dbReference type="SUPFAM" id="SSF54909">
    <property type="entry name" value="Dimeric alpha+beta barrel"/>
    <property type="match status" value="1"/>
</dbReference>
<evidence type="ECO:0000255" key="1">
    <source>
        <dbReference type="HAMAP-Rule" id="MF_01663"/>
    </source>
</evidence>
<protein>
    <recommendedName>
        <fullName evidence="1">L-rhamnose mutarotase</fullName>
        <ecNumber evidence="1">5.1.3.32</ecNumber>
    </recommendedName>
    <alternativeName>
        <fullName evidence="1">Rhamnose 1-epimerase</fullName>
    </alternativeName>
    <alternativeName>
        <fullName evidence="1">Type-3 mutarotase</fullName>
    </alternativeName>
</protein>
<comment type="function">
    <text evidence="1">Involved in the anomeric conversion of L-rhamnose.</text>
</comment>
<comment type="catalytic activity">
    <reaction evidence="1">
        <text>alpha-L-rhamnose = beta-L-rhamnose</text>
        <dbReference type="Rhea" id="RHEA:25584"/>
        <dbReference type="ChEBI" id="CHEBI:27586"/>
        <dbReference type="ChEBI" id="CHEBI:27907"/>
        <dbReference type="EC" id="5.1.3.32"/>
    </reaction>
</comment>
<comment type="pathway">
    <text evidence="1">Carbohydrate metabolism; L-rhamnose metabolism.</text>
</comment>
<comment type="subunit">
    <text evidence="1">Homodimer.</text>
</comment>
<comment type="subcellular location">
    <subcellularLocation>
        <location evidence="1">Cytoplasm</location>
    </subcellularLocation>
</comment>
<comment type="similarity">
    <text evidence="1">Belongs to the rhamnose mutarotase family.</text>
</comment>
<sequence length="104" mass="12334">MIRKAFVMQVNADAHEEYQRRHNPIWPELEAVLKSHGAHHYAIYLDQERNLLFATVEIESEERWNAVASTDVCQRWWKHMRDVMPANPDNSPVSAELKEVFYLQ</sequence>
<accession>B5QWX9</accession>